<protein>
    <recommendedName>
        <fullName evidence="1">DNA mismatch repair protein MutS</fullName>
    </recommendedName>
</protein>
<sequence length="887" mass="97862">MNSTSTATPIANENHTPMMQQYLRIKAEHPNEIVFYRMGDFYELFFDDAKKAAKLLDVTLTARGKSNGEPIPMAGVPYHAAENYLAKLVRLGVSVAIVEQVGDPATTKGPVERKVMRIVTPGTVSDEALLDETRDNLLVAITLKDERYGISSLDMGSGRFTVFEVADEEALIGEIERLQPAELLAPELLTVPNIISLRAGYRRRPDWEFEYDTAQRLLTRHFGTQDLSGFGCEDFTAGISAAGCLFAYAQETQKTTLSHVAKLVLDNPETKVTLDAATRRNLELDTNLAGTEDNTLFSVLNTTTTAMGGRLLRRWLHSPLRDIYILNQRQSAIEALLDNYQFEPLRHTLKHISDLERILGRLALRSARPRDLSRLCASIAEFPAIQQHLNGIDSPLLKKLAKEIREFPDLVDLLSRALMENPPVVIREGGVIAEGFDEELDELRAISTNAGDYLIKLEEQERAKTGLSTLKVGYNRVHGYYIEISKSQASSAPTEYIRRQTLKNAERFITPELKTFEDKALSAKSRALAREKGLYDDLIETLNEQLRELQVAASGVAELDVLTTLAERSNLLNFCKPELYEGEGIFIEQGRHPVVEQVLDDPFVPNDLLLDTDQRMLIITGPNMGGKSTYMRQTALIVLLAQIGCYVPASACKLGLVDRIFTRIGSSDDLAGGRSTFMVEMTETANILNNATRNSLVLMDEIGRGTSTYDGLSLAWACVEHLANNLHAFTLFATHYFELTGLPKALAGVQNVHLDATEHNDSIVFLHKIQPGPASKSFGLQVAKLAGIPSNVIADAGGHLRRLEAQPTVDTPHQFPAPEPIALQEPVAEPEPNKPAAAAKTKPASPQPDLFASAAPSAVEIKLRSINPDNLTPRQALQALYDLKDIS</sequence>
<evidence type="ECO:0000255" key="1">
    <source>
        <dbReference type="HAMAP-Rule" id="MF_00096"/>
    </source>
</evidence>
<evidence type="ECO:0000256" key="2">
    <source>
        <dbReference type="SAM" id="MobiDB-lite"/>
    </source>
</evidence>
<name>MUTS_SACD2</name>
<comment type="function">
    <text evidence="1">This protein is involved in the repair of mismatches in DNA. It is possible that it carries out the mismatch recognition step. This protein has a weak ATPase activity.</text>
</comment>
<comment type="similarity">
    <text evidence="1">Belongs to the DNA mismatch repair MutS family.</text>
</comment>
<reference key="1">
    <citation type="journal article" date="2008" name="PLoS Genet.">
        <title>Complete genome sequence of the complex carbohydrate-degrading marine bacterium, Saccharophagus degradans strain 2-40 T.</title>
        <authorList>
            <person name="Weiner R.M."/>
            <person name="Taylor L.E. II"/>
            <person name="Henrissat B."/>
            <person name="Hauser L."/>
            <person name="Land M."/>
            <person name="Coutinho P.M."/>
            <person name="Rancurel C."/>
            <person name="Saunders E.H."/>
            <person name="Longmire A.G."/>
            <person name="Zhang H."/>
            <person name="Bayer E.A."/>
            <person name="Gilbert H.J."/>
            <person name="Larimer F."/>
            <person name="Zhulin I.B."/>
            <person name="Ekborg N.A."/>
            <person name="Lamed R."/>
            <person name="Richardson P.M."/>
            <person name="Borovok I."/>
            <person name="Hutcheson S."/>
        </authorList>
    </citation>
    <scope>NUCLEOTIDE SEQUENCE [LARGE SCALE GENOMIC DNA]</scope>
    <source>
        <strain>2-40 / ATCC 43961 / DSM 17024</strain>
    </source>
</reference>
<accession>Q21LB1</accession>
<organism>
    <name type="scientific">Saccharophagus degradans (strain 2-40 / ATCC 43961 / DSM 17024)</name>
    <dbReference type="NCBI Taxonomy" id="203122"/>
    <lineage>
        <taxon>Bacteria</taxon>
        <taxon>Pseudomonadati</taxon>
        <taxon>Pseudomonadota</taxon>
        <taxon>Gammaproteobacteria</taxon>
        <taxon>Cellvibrionales</taxon>
        <taxon>Cellvibrionaceae</taxon>
        <taxon>Saccharophagus</taxon>
    </lineage>
</organism>
<keyword id="KW-0067">ATP-binding</keyword>
<keyword id="KW-0227">DNA damage</keyword>
<keyword id="KW-0234">DNA repair</keyword>
<keyword id="KW-0238">DNA-binding</keyword>
<keyword id="KW-0547">Nucleotide-binding</keyword>
<keyword id="KW-1185">Reference proteome</keyword>
<gene>
    <name evidence="1" type="primary">mutS</name>
    <name type="ordered locus">Sde_1256</name>
</gene>
<dbReference type="EMBL" id="CP000282">
    <property type="protein sequence ID" value="ABD80518.1"/>
    <property type="molecule type" value="Genomic_DNA"/>
</dbReference>
<dbReference type="RefSeq" id="WP_011467738.1">
    <property type="nucleotide sequence ID" value="NC_007912.1"/>
</dbReference>
<dbReference type="SMR" id="Q21LB1"/>
<dbReference type="STRING" id="203122.Sde_1256"/>
<dbReference type="GeneID" id="98612933"/>
<dbReference type="KEGG" id="sde:Sde_1256"/>
<dbReference type="eggNOG" id="COG0249">
    <property type="taxonomic scope" value="Bacteria"/>
</dbReference>
<dbReference type="HOGENOM" id="CLU_002472_1_3_6"/>
<dbReference type="OrthoDB" id="9802448at2"/>
<dbReference type="Proteomes" id="UP000001947">
    <property type="component" value="Chromosome"/>
</dbReference>
<dbReference type="GO" id="GO:0005829">
    <property type="term" value="C:cytosol"/>
    <property type="evidence" value="ECO:0007669"/>
    <property type="project" value="TreeGrafter"/>
</dbReference>
<dbReference type="GO" id="GO:0005524">
    <property type="term" value="F:ATP binding"/>
    <property type="evidence" value="ECO:0007669"/>
    <property type="project" value="UniProtKB-UniRule"/>
</dbReference>
<dbReference type="GO" id="GO:0140664">
    <property type="term" value="F:ATP-dependent DNA damage sensor activity"/>
    <property type="evidence" value="ECO:0007669"/>
    <property type="project" value="InterPro"/>
</dbReference>
<dbReference type="GO" id="GO:0003684">
    <property type="term" value="F:damaged DNA binding"/>
    <property type="evidence" value="ECO:0007669"/>
    <property type="project" value="UniProtKB-UniRule"/>
</dbReference>
<dbReference type="GO" id="GO:0030983">
    <property type="term" value="F:mismatched DNA binding"/>
    <property type="evidence" value="ECO:0007669"/>
    <property type="project" value="InterPro"/>
</dbReference>
<dbReference type="GO" id="GO:0006298">
    <property type="term" value="P:mismatch repair"/>
    <property type="evidence" value="ECO:0007669"/>
    <property type="project" value="UniProtKB-UniRule"/>
</dbReference>
<dbReference type="CDD" id="cd03284">
    <property type="entry name" value="ABC_MutS1"/>
    <property type="match status" value="1"/>
</dbReference>
<dbReference type="FunFam" id="1.10.1420.10:FF:000002">
    <property type="entry name" value="DNA mismatch repair protein MutS"/>
    <property type="match status" value="1"/>
</dbReference>
<dbReference type="FunFam" id="3.40.1170.10:FF:000001">
    <property type="entry name" value="DNA mismatch repair protein MutS"/>
    <property type="match status" value="1"/>
</dbReference>
<dbReference type="FunFam" id="3.40.50.300:FF:000283">
    <property type="entry name" value="DNA mismatch repair protein MutS"/>
    <property type="match status" value="1"/>
</dbReference>
<dbReference type="Gene3D" id="1.10.1420.10">
    <property type="match status" value="2"/>
</dbReference>
<dbReference type="Gene3D" id="6.10.140.430">
    <property type="match status" value="1"/>
</dbReference>
<dbReference type="Gene3D" id="3.40.1170.10">
    <property type="entry name" value="DNA repair protein MutS, domain I"/>
    <property type="match status" value="1"/>
</dbReference>
<dbReference type="Gene3D" id="3.30.420.110">
    <property type="entry name" value="MutS, connector domain"/>
    <property type="match status" value="1"/>
</dbReference>
<dbReference type="Gene3D" id="3.40.50.300">
    <property type="entry name" value="P-loop containing nucleotide triphosphate hydrolases"/>
    <property type="match status" value="1"/>
</dbReference>
<dbReference type="HAMAP" id="MF_00096">
    <property type="entry name" value="MutS"/>
    <property type="match status" value="1"/>
</dbReference>
<dbReference type="InterPro" id="IPR005748">
    <property type="entry name" value="DNA_mismatch_repair_MutS"/>
</dbReference>
<dbReference type="InterPro" id="IPR007695">
    <property type="entry name" value="DNA_mismatch_repair_MutS-lik_N"/>
</dbReference>
<dbReference type="InterPro" id="IPR017261">
    <property type="entry name" value="DNA_mismatch_repair_MutS/MSH"/>
</dbReference>
<dbReference type="InterPro" id="IPR000432">
    <property type="entry name" value="DNA_mismatch_repair_MutS_C"/>
</dbReference>
<dbReference type="InterPro" id="IPR007861">
    <property type="entry name" value="DNA_mismatch_repair_MutS_clamp"/>
</dbReference>
<dbReference type="InterPro" id="IPR007696">
    <property type="entry name" value="DNA_mismatch_repair_MutS_core"/>
</dbReference>
<dbReference type="InterPro" id="IPR016151">
    <property type="entry name" value="DNA_mismatch_repair_MutS_N"/>
</dbReference>
<dbReference type="InterPro" id="IPR036187">
    <property type="entry name" value="DNA_mismatch_repair_MutS_sf"/>
</dbReference>
<dbReference type="InterPro" id="IPR007860">
    <property type="entry name" value="DNA_mmatch_repair_MutS_con_dom"/>
</dbReference>
<dbReference type="InterPro" id="IPR045076">
    <property type="entry name" value="MutS"/>
</dbReference>
<dbReference type="InterPro" id="IPR036678">
    <property type="entry name" value="MutS_con_dom_sf"/>
</dbReference>
<dbReference type="InterPro" id="IPR027417">
    <property type="entry name" value="P-loop_NTPase"/>
</dbReference>
<dbReference type="NCBIfam" id="TIGR01070">
    <property type="entry name" value="mutS1"/>
    <property type="match status" value="1"/>
</dbReference>
<dbReference type="NCBIfam" id="NF003810">
    <property type="entry name" value="PRK05399.1"/>
    <property type="match status" value="1"/>
</dbReference>
<dbReference type="PANTHER" id="PTHR11361:SF34">
    <property type="entry name" value="DNA MISMATCH REPAIR PROTEIN MSH1, MITOCHONDRIAL"/>
    <property type="match status" value="1"/>
</dbReference>
<dbReference type="PANTHER" id="PTHR11361">
    <property type="entry name" value="DNA MISMATCH REPAIR PROTEIN MUTS FAMILY MEMBER"/>
    <property type="match status" value="1"/>
</dbReference>
<dbReference type="Pfam" id="PF01624">
    <property type="entry name" value="MutS_I"/>
    <property type="match status" value="1"/>
</dbReference>
<dbReference type="Pfam" id="PF05188">
    <property type="entry name" value="MutS_II"/>
    <property type="match status" value="1"/>
</dbReference>
<dbReference type="Pfam" id="PF05192">
    <property type="entry name" value="MutS_III"/>
    <property type="match status" value="1"/>
</dbReference>
<dbReference type="Pfam" id="PF05190">
    <property type="entry name" value="MutS_IV"/>
    <property type="match status" value="1"/>
</dbReference>
<dbReference type="Pfam" id="PF00488">
    <property type="entry name" value="MutS_V"/>
    <property type="match status" value="1"/>
</dbReference>
<dbReference type="PIRSF" id="PIRSF037677">
    <property type="entry name" value="DNA_mis_repair_Msh6"/>
    <property type="match status" value="1"/>
</dbReference>
<dbReference type="SMART" id="SM00534">
    <property type="entry name" value="MUTSac"/>
    <property type="match status" value="1"/>
</dbReference>
<dbReference type="SMART" id="SM00533">
    <property type="entry name" value="MUTSd"/>
    <property type="match status" value="1"/>
</dbReference>
<dbReference type="SUPFAM" id="SSF55271">
    <property type="entry name" value="DNA repair protein MutS, domain I"/>
    <property type="match status" value="1"/>
</dbReference>
<dbReference type="SUPFAM" id="SSF53150">
    <property type="entry name" value="DNA repair protein MutS, domain II"/>
    <property type="match status" value="1"/>
</dbReference>
<dbReference type="SUPFAM" id="SSF48334">
    <property type="entry name" value="DNA repair protein MutS, domain III"/>
    <property type="match status" value="1"/>
</dbReference>
<dbReference type="SUPFAM" id="SSF52540">
    <property type="entry name" value="P-loop containing nucleoside triphosphate hydrolases"/>
    <property type="match status" value="1"/>
</dbReference>
<dbReference type="PROSITE" id="PS00486">
    <property type="entry name" value="DNA_MISMATCH_REPAIR_2"/>
    <property type="match status" value="1"/>
</dbReference>
<proteinExistence type="inferred from homology"/>
<feature type="chain" id="PRO_0000335222" description="DNA mismatch repair protein MutS">
    <location>
        <begin position="1"/>
        <end position="887"/>
    </location>
</feature>
<feature type="region of interest" description="Disordered" evidence="2">
    <location>
        <begin position="828"/>
        <end position="853"/>
    </location>
</feature>
<feature type="compositionally biased region" description="Low complexity" evidence="2">
    <location>
        <begin position="834"/>
        <end position="848"/>
    </location>
</feature>
<feature type="binding site" evidence="1">
    <location>
        <begin position="621"/>
        <end position="628"/>
    </location>
    <ligand>
        <name>ATP</name>
        <dbReference type="ChEBI" id="CHEBI:30616"/>
    </ligand>
</feature>